<proteinExistence type="inferred from homology"/>
<name>HEM31_STRCO</name>
<reference key="1">
    <citation type="journal article" date="2002" name="Nature">
        <title>Complete genome sequence of the model actinomycete Streptomyces coelicolor A3(2).</title>
        <authorList>
            <person name="Bentley S.D."/>
            <person name="Chater K.F."/>
            <person name="Cerdeno-Tarraga A.-M."/>
            <person name="Challis G.L."/>
            <person name="Thomson N.R."/>
            <person name="James K.D."/>
            <person name="Harris D.E."/>
            <person name="Quail M.A."/>
            <person name="Kieser H."/>
            <person name="Harper D."/>
            <person name="Bateman A."/>
            <person name="Brown S."/>
            <person name="Chandra G."/>
            <person name="Chen C.W."/>
            <person name="Collins M."/>
            <person name="Cronin A."/>
            <person name="Fraser A."/>
            <person name="Goble A."/>
            <person name="Hidalgo J."/>
            <person name="Hornsby T."/>
            <person name="Howarth S."/>
            <person name="Huang C.-H."/>
            <person name="Kieser T."/>
            <person name="Larke L."/>
            <person name="Murphy L.D."/>
            <person name="Oliver K."/>
            <person name="O'Neil S."/>
            <person name="Rabbinowitsch E."/>
            <person name="Rajandream M.A."/>
            <person name="Rutherford K.M."/>
            <person name="Rutter S."/>
            <person name="Seeger K."/>
            <person name="Saunders D."/>
            <person name="Sharp S."/>
            <person name="Squares R."/>
            <person name="Squares S."/>
            <person name="Taylor K."/>
            <person name="Warren T."/>
            <person name="Wietzorrek A."/>
            <person name="Woodward J.R."/>
            <person name="Barrell B.G."/>
            <person name="Parkhill J."/>
            <person name="Hopwood D.A."/>
        </authorList>
    </citation>
    <scope>NUCLEOTIDE SEQUENCE [LARGE SCALE GENOMIC DNA]</scope>
    <source>
        <strain>ATCC BAA-471 / A3(2) / M145</strain>
    </source>
</reference>
<keyword id="KW-0627">Porphyrin biosynthesis</keyword>
<keyword id="KW-1185">Reference proteome</keyword>
<keyword id="KW-0808">Transferase</keyword>
<sequence>MTEKALRLGTRRSKLAMAQSGQVADAVSQVTGRPVELVEITTYGDTSREHLAQIGGTGVFVAALRDALLRGEVDFAVHSLKDLPTAQHEGLVVAAIPEREDPRDVVVARDARKLTDLPRGARVGTGAPRRMAQLNAYARTHGMEIETVPIRGNVDTRIGYVRSGELDAVVLAAAGLNRVGRIDEVTDFLSVDTVLPAPGQGALAVECAADNASLIAALAELDDPFTRAAVTAERSLLAALEAGCSAPVGALADLLADGQTVKEMRLRGVVGTTDGSTLVQLSTTGPVPETHEAALALGGELAAEMLAQGAAGLMGERAQ</sequence>
<accession>Q9WX16</accession>
<gene>
    <name type="primary">hemC1</name>
    <name type="ordered locus">SCO3318</name>
    <name type="ORF">SCE68.16c</name>
</gene>
<evidence type="ECO:0000250" key="1"/>
<evidence type="ECO:0000305" key="2"/>
<comment type="function">
    <text evidence="1">Tetrapolymerization of the monopyrrole PBG into the hydroxymethylbilane pre-uroporphyrinogen in several discrete steps.</text>
</comment>
<comment type="catalytic activity">
    <reaction>
        <text>4 porphobilinogen + H2O = hydroxymethylbilane + 4 NH4(+)</text>
        <dbReference type="Rhea" id="RHEA:13185"/>
        <dbReference type="ChEBI" id="CHEBI:15377"/>
        <dbReference type="ChEBI" id="CHEBI:28938"/>
        <dbReference type="ChEBI" id="CHEBI:57845"/>
        <dbReference type="ChEBI" id="CHEBI:58126"/>
        <dbReference type="EC" id="2.5.1.61"/>
    </reaction>
</comment>
<comment type="cofactor">
    <cofactor evidence="1">
        <name>dipyrromethane</name>
        <dbReference type="ChEBI" id="CHEBI:60342"/>
    </cofactor>
    <text evidence="1">Binds 1 dipyrromethane group covalently.</text>
</comment>
<comment type="pathway">
    <text>Porphyrin-containing compound metabolism; protoporphyrin-IX biosynthesis; coproporphyrinogen-III from 5-aminolevulinate: step 2/4.</text>
</comment>
<comment type="subunit">
    <text evidence="1">Monomer.</text>
</comment>
<comment type="miscellaneous">
    <text evidence="1">The porphobilinogen subunits are added to the dipyrromethane group.</text>
</comment>
<comment type="similarity">
    <text evidence="2">Belongs to the HMBS family.</text>
</comment>
<dbReference type="EC" id="2.5.1.61"/>
<dbReference type="EMBL" id="AL939116">
    <property type="protein sequence ID" value="CAB45352.1"/>
    <property type="molecule type" value="Genomic_DNA"/>
</dbReference>
<dbReference type="PIR" id="T36266">
    <property type="entry name" value="T36266"/>
</dbReference>
<dbReference type="RefSeq" id="NP_627528.1">
    <property type="nucleotide sequence ID" value="NC_003888.3"/>
</dbReference>
<dbReference type="SMR" id="Q9WX16"/>
<dbReference type="FunCoup" id="Q9WX16">
    <property type="interactions" value="493"/>
</dbReference>
<dbReference type="STRING" id="100226.gene:17760937"/>
<dbReference type="PaxDb" id="100226-SCO3318"/>
<dbReference type="KEGG" id="sco:SCO3318"/>
<dbReference type="PATRIC" id="fig|100226.15.peg.3378"/>
<dbReference type="eggNOG" id="COG0181">
    <property type="taxonomic scope" value="Bacteria"/>
</dbReference>
<dbReference type="HOGENOM" id="CLU_019704_1_0_11"/>
<dbReference type="InParanoid" id="Q9WX16"/>
<dbReference type="OrthoDB" id="9810298at2"/>
<dbReference type="PhylomeDB" id="Q9WX16"/>
<dbReference type="UniPathway" id="UPA00251">
    <property type="reaction ID" value="UER00319"/>
</dbReference>
<dbReference type="Proteomes" id="UP000001973">
    <property type="component" value="Chromosome"/>
</dbReference>
<dbReference type="GO" id="GO:0005737">
    <property type="term" value="C:cytoplasm"/>
    <property type="evidence" value="ECO:0000318"/>
    <property type="project" value="GO_Central"/>
</dbReference>
<dbReference type="GO" id="GO:0004418">
    <property type="term" value="F:hydroxymethylbilane synthase activity"/>
    <property type="evidence" value="ECO:0000318"/>
    <property type="project" value="GO_Central"/>
</dbReference>
<dbReference type="GO" id="GO:0006783">
    <property type="term" value="P:heme biosynthetic process"/>
    <property type="evidence" value="ECO:0000318"/>
    <property type="project" value="GO_Central"/>
</dbReference>
<dbReference type="GO" id="GO:0006782">
    <property type="term" value="P:protoporphyrinogen IX biosynthetic process"/>
    <property type="evidence" value="ECO:0007669"/>
    <property type="project" value="UniProtKB-UniRule"/>
</dbReference>
<dbReference type="FunFam" id="3.30.160.40:FF:000001">
    <property type="entry name" value="Porphobilinogen deaminase"/>
    <property type="match status" value="1"/>
</dbReference>
<dbReference type="FunFam" id="3.40.190.10:FF:000005">
    <property type="entry name" value="Porphobilinogen deaminase"/>
    <property type="match status" value="1"/>
</dbReference>
<dbReference type="FunFam" id="3.40.190.10:FF:000086">
    <property type="entry name" value="Probable porphobilinogen deaminase"/>
    <property type="match status" value="1"/>
</dbReference>
<dbReference type="Gene3D" id="3.40.190.10">
    <property type="entry name" value="Periplasmic binding protein-like II"/>
    <property type="match status" value="2"/>
</dbReference>
<dbReference type="Gene3D" id="3.30.160.40">
    <property type="entry name" value="Porphobilinogen deaminase, C-terminal domain"/>
    <property type="match status" value="1"/>
</dbReference>
<dbReference type="HAMAP" id="MF_00260">
    <property type="entry name" value="Porphobil_deam"/>
    <property type="match status" value="1"/>
</dbReference>
<dbReference type="InterPro" id="IPR000860">
    <property type="entry name" value="HemC"/>
</dbReference>
<dbReference type="InterPro" id="IPR022419">
    <property type="entry name" value="Porphobilin_deaminase_cofac_BS"/>
</dbReference>
<dbReference type="InterPro" id="IPR022417">
    <property type="entry name" value="Porphobilin_deaminase_N"/>
</dbReference>
<dbReference type="InterPro" id="IPR022418">
    <property type="entry name" value="Porphobilinogen_deaminase_C"/>
</dbReference>
<dbReference type="InterPro" id="IPR036803">
    <property type="entry name" value="Porphobilinogen_deaminase_C_sf"/>
</dbReference>
<dbReference type="NCBIfam" id="TIGR00212">
    <property type="entry name" value="hemC"/>
    <property type="match status" value="1"/>
</dbReference>
<dbReference type="PANTHER" id="PTHR11557">
    <property type="entry name" value="PORPHOBILINOGEN DEAMINASE"/>
    <property type="match status" value="1"/>
</dbReference>
<dbReference type="PANTHER" id="PTHR11557:SF0">
    <property type="entry name" value="PORPHOBILINOGEN DEAMINASE"/>
    <property type="match status" value="1"/>
</dbReference>
<dbReference type="Pfam" id="PF01379">
    <property type="entry name" value="Porphobil_deam"/>
    <property type="match status" value="1"/>
</dbReference>
<dbReference type="Pfam" id="PF03900">
    <property type="entry name" value="Porphobil_deamC"/>
    <property type="match status" value="1"/>
</dbReference>
<dbReference type="PIRSF" id="PIRSF001438">
    <property type="entry name" value="4pyrrol_synth_OHMeBilane_synth"/>
    <property type="match status" value="1"/>
</dbReference>
<dbReference type="PRINTS" id="PR00151">
    <property type="entry name" value="PORPHBDMNASE"/>
</dbReference>
<dbReference type="SUPFAM" id="SSF53850">
    <property type="entry name" value="Periplasmic binding protein-like II"/>
    <property type="match status" value="1"/>
</dbReference>
<dbReference type="SUPFAM" id="SSF54782">
    <property type="entry name" value="Porphobilinogen deaminase (hydroxymethylbilane synthase), C-terminal domain"/>
    <property type="match status" value="1"/>
</dbReference>
<dbReference type="PROSITE" id="PS00533">
    <property type="entry name" value="PORPHOBILINOGEN_DEAM"/>
    <property type="match status" value="1"/>
</dbReference>
<feature type="chain" id="PRO_0000142999" description="Porphobilinogen deaminase 1">
    <location>
        <begin position="1"/>
        <end position="319"/>
    </location>
</feature>
<feature type="modified residue" description="S-(dipyrrolylmethanemethyl)cysteine" evidence="1">
    <location>
        <position position="244"/>
    </location>
</feature>
<organism>
    <name type="scientific">Streptomyces coelicolor (strain ATCC BAA-471 / A3(2) / M145)</name>
    <dbReference type="NCBI Taxonomy" id="100226"/>
    <lineage>
        <taxon>Bacteria</taxon>
        <taxon>Bacillati</taxon>
        <taxon>Actinomycetota</taxon>
        <taxon>Actinomycetes</taxon>
        <taxon>Kitasatosporales</taxon>
        <taxon>Streptomycetaceae</taxon>
        <taxon>Streptomyces</taxon>
        <taxon>Streptomyces albidoflavus group</taxon>
    </lineage>
</organism>
<protein>
    <recommendedName>
        <fullName>Porphobilinogen deaminase 1</fullName>
        <shortName>PBG 1</shortName>
        <ecNumber>2.5.1.61</ecNumber>
    </recommendedName>
    <alternativeName>
        <fullName>Hydroxymethylbilane synthase 1</fullName>
        <shortName>HMBS 1</shortName>
    </alternativeName>
    <alternativeName>
        <fullName>Pre-uroporphyrinogen synthase 1</fullName>
    </alternativeName>
</protein>